<gene>
    <name evidence="4" type="primary">MDAR2</name>
    <name evidence="4" type="synonym">MDHAR2</name>
    <name evidence="8" type="ordered locus">Os02g0707100</name>
    <name evidence="5" type="ordered locus">LOC_Os02g47800</name>
    <name evidence="6" type="ORF">49D11.20a</name>
    <name evidence="9" type="ORF">OsJ_35954</name>
    <name evidence="7" type="ORF">P0680A05.39</name>
</gene>
<evidence type="ECO:0000250" key="1">
    <source>
        <dbReference type="UniProtKB" id="Q652L6"/>
    </source>
</evidence>
<evidence type="ECO:0000255" key="2"/>
<evidence type="ECO:0000269" key="3">
    <source>
    </source>
</evidence>
<evidence type="ECO:0000303" key="4">
    <source>
    </source>
</evidence>
<evidence type="ECO:0000305" key="5"/>
<evidence type="ECO:0000312" key="6">
    <source>
        <dbReference type="EMBL" id="AAL87166.1"/>
    </source>
</evidence>
<evidence type="ECO:0000312" key="7">
    <source>
        <dbReference type="EMBL" id="BAD08054.1"/>
    </source>
</evidence>
<evidence type="ECO:0000312" key="8">
    <source>
        <dbReference type="EMBL" id="BAF09789.1"/>
    </source>
</evidence>
<evidence type="ECO:0000312" key="9">
    <source>
        <dbReference type="EMBL" id="EAZ20346.1"/>
    </source>
</evidence>
<comment type="function">
    <text evidence="1">Catalyzes the conversion of monodehydroascorbate to ascorbate, oxidizing NADH in the process. Ascorbate is a major antioxidant against reactive oxygen species (ROS) and nitric oxide (NO).</text>
</comment>
<comment type="catalytic activity">
    <reaction evidence="1">
        <text>2 monodehydro-L-ascorbate radical + NADH + H(+) = 2 L-ascorbate + NAD(+)</text>
        <dbReference type="Rhea" id="RHEA:14581"/>
        <dbReference type="ChEBI" id="CHEBI:15378"/>
        <dbReference type="ChEBI" id="CHEBI:38290"/>
        <dbReference type="ChEBI" id="CHEBI:57540"/>
        <dbReference type="ChEBI" id="CHEBI:57945"/>
        <dbReference type="ChEBI" id="CHEBI:59513"/>
        <dbReference type="EC" id="1.6.5.4"/>
    </reaction>
</comment>
<comment type="cofactor">
    <cofactor evidence="1">
        <name>FAD</name>
        <dbReference type="ChEBI" id="CHEBI:57692"/>
    </cofactor>
</comment>
<comment type="subcellular location">
    <subcellularLocation>
        <location evidence="5">Peroxisome membrane</location>
        <topology evidence="2">Multi-pass membrane protein</topology>
    </subcellularLocation>
</comment>
<comment type="induction">
    <text evidence="3">Down-regulated during senescence.</text>
</comment>
<comment type="similarity">
    <text evidence="5">Belongs to the FAD-dependent oxidoreductase family.</text>
</comment>
<protein>
    <recommendedName>
        <fullName evidence="5">Monodehydroascorbate reductase 2, peroxisomal</fullName>
        <shortName evidence="4">OsMDAR2</shortName>
        <shortName evidence="4">OsMDHAR2</shortName>
        <ecNumber evidence="1">1.6.5.4</ecNumber>
    </recommendedName>
</protein>
<dbReference type="EC" id="1.6.5.4" evidence="1"/>
<dbReference type="EMBL" id="AF480496">
    <property type="protein sequence ID" value="AAL87166.1"/>
    <property type="molecule type" value="Genomic_DNA"/>
</dbReference>
<dbReference type="EMBL" id="AP005323">
    <property type="protein sequence ID" value="BAD08054.1"/>
    <property type="molecule type" value="Genomic_DNA"/>
</dbReference>
<dbReference type="EMBL" id="AP005844">
    <property type="protein sequence ID" value="BAD08098.1"/>
    <property type="molecule type" value="Genomic_DNA"/>
</dbReference>
<dbReference type="EMBL" id="AP008208">
    <property type="protein sequence ID" value="BAF09789.1"/>
    <property type="molecule type" value="Genomic_DNA"/>
</dbReference>
<dbReference type="EMBL" id="AP014958">
    <property type="protein sequence ID" value="BAS80528.1"/>
    <property type="molecule type" value="Genomic_DNA"/>
</dbReference>
<dbReference type="EMBL" id="CM000149">
    <property type="protein sequence ID" value="EAZ20346.1"/>
    <property type="molecule type" value="Genomic_DNA"/>
</dbReference>
<dbReference type="EMBL" id="AK065585">
    <property type="protein sequence ID" value="BAG89572.1"/>
    <property type="molecule type" value="mRNA"/>
</dbReference>
<dbReference type="RefSeq" id="XP_015627040.1">
    <property type="nucleotide sequence ID" value="XM_015771554.1"/>
</dbReference>
<dbReference type="SMR" id="Q8S3R2"/>
<dbReference type="FunCoup" id="Q8S3R2">
    <property type="interactions" value="1342"/>
</dbReference>
<dbReference type="STRING" id="39947.Q8S3R2"/>
<dbReference type="PaxDb" id="39947-Q8S3R2"/>
<dbReference type="EnsemblPlants" id="Os02t0707100-01">
    <property type="protein sequence ID" value="Os02t0707100-01"/>
    <property type="gene ID" value="Os02g0707100"/>
</dbReference>
<dbReference type="Gramene" id="Os02t0707100-01">
    <property type="protein sequence ID" value="Os02t0707100-01"/>
    <property type="gene ID" value="Os02g0707100"/>
</dbReference>
<dbReference type="KEGG" id="dosa:Os02g0707100"/>
<dbReference type="eggNOG" id="KOG1336">
    <property type="taxonomic scope" value="Eukaryota"/>
</dbReference>
<dbReference type="HOGENOM" id="CLU_003291_4_1_1"/>
<dbReference type="InParanoid" id="Q8S3R2"/>
<dbReference type="OMA" id="EEHCMAR"/>
<dbReference type="OrthoDB" id="432169at2759"/>
<dbReference type="Proteomes" id="UP000000763">
    <property type="component" value="Chromosome 2"/>
</dbReference>
<dbReference type="Proteomes" id="UP000007752">
    <property type="component" value="Chromosome 12"/>
</dbReference>
<dbReference type="Proteomes" id="UP000059680">
    <property type="component" value="Chromosome 2"/>
</dbReference>
<dbReference type="ExpressionAtlas" id="Q8S3R2">
    <property type="expression patterns" value="baseline and differential"/>
</dbReference>
<dbReference type="GO" id="GO:0005737">
    <property type="term" value="C:cytoplasm"/>
    <property type="evidence" value="ECO:0000318"/>
    <property type="project" value="GO_Central"/>
</dbReference>
<dbReference type="GO" id="GO:0005778">
    <property type="term" value="C:peroxisomal membrane"/>
    <property type="evidence" value="ECO:0007669"/>
    <property type="project" value="UniProtKB-SubCell"/>
</dbReference>
<dbReference type="GO" id="GO:0016656">
    <property type="term" value="F:monodehydroascorbate reductase (NADH) activity"/>
    <property type="evidence" value="ECO:0007669"/>
    <property type="project" value="UniProtKB-EC"/>
</dbReference>
<dbReference type="GO" id="GO:0016651">
    <property type="term" value="F:oxidoreductase activity, acting on NAD(P)H"/>
    <property type="evidence" value="ECO:0000318"/>
    <property type="project" value="GO_Central"/>
</dbReference>
<dbReference type="Gene3D" id="3.30.390.30">
    <property type="match status" value="1"/>
</dbReference>
<dbReference type="Gene3D" id="3.50.50.60">
    <property type="entry name" value="FAD/NAD(P)-binding domain"/>
    <property type="match status" value="2"/>
</dbReference>
<dbReference type="InterPro" id="IPR050446">
    <property type="entry name" value="FAD-oxidoreductase/Apoptosis"/>
</dbReference>
<dbReference type="InterPro" id="IPR036188">
    <property type="entry name" value="FAD/NAD-bd_sf"/>
</dbReference>
<dbReference type="InterPro" id="IPR023753">
    <property type="entry name" value="FAD/NAD-binding_dom"/>
</dbReference>
<dbReference type="InterPro" id="IPR016156">
    <property type="entry name" value="FAD/NAD-linked_Rdtase_dimer_sf"/>
</dbReference>
<dbReference type="InterPro" id="IPR048618">
    <property type="entry name" value="MDHAR3-like_C"/>
</dbReference>
<dbReference type="PANTHER" id="PTHR43557">
    <property type="entry name" value="APOPTOSIS-INDUCING FACTOR 1"/>
    <property type="match status" value="1"/>
</dbReference>
<dbReference type="PANTHER" id="PTHR43557:SF2">
    <property type="entry name" value="RIESKE DOMAIN-CONTAINING PROTEIN-RELATED"/>
    <property type="match status" value="1"/>
</dbReference>
<dbReference type="Pfam" id="PF21791">
    <property type="entry name" value="MDHAR3-like_C"/>
    <property type="match status" value="1"/>
</dbReference>
<dbReference type="Pfam" id="PF07992">
    <property type="entry name" value="Pyr_redox_2"/>
    <property type="match status" value="1"/>
</dbReference>
<dbReference type="PRINTS" id="PR00368">
    <property type="entry name" value="FADPNR"/>
</dbReference>
<dbReference type="PRINTS" id="PR00411">
    <property type="entry name" value="PNDRDTASEI"/>
</dbReference>
<dbReference type="SUPFAM" id="SSF51905">
    <property type="entry name" value="FAD/NAD(P)-binding domain"/>
    <property type="match status" value="2"/>
</dbReference>
<dbReference type="SUPFAM" id="SSF55424">
    <property type="entry name" value="FAD/NAD-linked reductases, dimerisation (C-terminal) domain"/>
    <property type="match status" value="1"/>
</dbReference>
<feature type="chain" id="PRO_0000442020" description="Monodehydroascorbate reductase 2, peroxisomal">
    <location>
        <begin position="1"/>
        <end position="476"/>
    </location>
</feature>
<feature type="topological domain" description="Cytoplasmic" evidence="5">
    <location>
        <begin position="1"/>
        <end position="3"/>
    </location>
</feature>
<feature type="transmembrane region" description="Helical" evidence="2">
    <location>
        <begin position="4"/>
        <end position="24"/>
    </location>
</feature>
<feature type="topological domain" description="Peroxisomal" evidence="5">
    <location>
        <begin position="25"/>
        <end position="447"/>
    </location>
</feature>
<feature type="transmembrane region" description="Helical" evidence="2">
    <location>
        <begin position="448"/>
        <end position="468"/>
    </location>
</feature>
<feature type="topological domain" description="Cytoplasmic" evidence="5">
    <location>
        <begin position="469"/>
        <end position="476"/>
    </location>
</feature>
<feature type="binding site" evidence="1">
    <location>
        <begin position="12"/>
        <end position="15"/>
    </location>
    <ligand>
        <name>FAD</name>
        <dbReference type="ChEBI" id="CHEBI:57692"/>
    </ligand>
</feature>
<feature type="binding site" evidence="1">
    <location>
        <position position="40"/>
    </location>
    <ligand>
        <name>FAD</name>
        <dbReference type="ChEBI" id="CHEBI:57692"/>
    </ligand>
</feature>
<feature type="binding site" evidence="1">
    <location>
        <position position="47"/>
    </location>
    <ligand>
        <name>FAD</name>
        <dbReference type="ChEBI" id="CHEBI:57692"/>
    </ligand>
</feature>
<feature type="binding site" evidence="1">
    <location>
        <position position="52"/>
    </location>
    <ligand>
        <name>FAD</name>
        <dbReference type="ChEBI" id="CHEBI:57692"/>
    </ligand>
</feature>
<feature type="binding site" evidence="1">
    <location>
        <begin position="146"/>
        <end position="147"/>
    </location>
    <ligand>
        <name>FAD</name>
        <dbReference type="ChEBI" id="CHEBI:57692"/>
    </ligand>
</feature>
<feature type="binding site" evidence="1">
    <location>
        <begin position="171"/>
        <end position="177"/>
    </location>
    <ligand>
        <name>NAD(+)</name>
        <dbReference type="ChEBI" id="CHEBI:57540"/>
    </ligand>
</feature>
<feature type="binding site" evidence="1">
    <location>
        <begin position="173"/>
        <end position="177"/>
    </location>
    <ligand>
        <name>NADP(+)</name>
        <dbReference type="ChEBI" id="CHEBI:58349"/>
    </ligand>
</feature>
<feature type="binding site" evidence="1">
    <location>
        <position position="195"/>
    </location>
    <ligand>
        <name>NAD(+)</name>
        <dbReference type="ChEBI" id="CHEBI:57540"/>
    </ligand>
</feature>
<feature type="binding site" evidence="1">
    <location>
        <position position="201"/>
    </location>
    <ligand>
        <name>NAD(+)</name>
        <dbReference type="ChEBI" id="CHEBI:57540"/>
    </ligand>
</feature>
<feature type="binding site" evidence="1">
    <location>
        <position position="201"/>
    </location>
    <ligand>
        <name>NADP(+)</name>
        <dbReference type="ChEBI" id="CHEBI:58349"/>
    </ligand>
</feature>
<feature type="binding site" evidence="1">
    <location>
        <position position="260"/>
    </location>
    <ligand>
        <name>NAD(+)</name>
        <dbReference type="ChEBI" id="CHEBI:57540"/>
    </ligand>
</feature>
<feature type="binding site" evidence="1">
    <location>
        <position position="260"/>
    </location>
    <ligand>
        <name>NADP(+)</name>
        <dbReference type="ChEBI" id="CHEBI:58349"/>
    </ligand>
</feature>
<feature type="binding site" evidence="1">
    <location>
        <position position="297"/>
    </location>
    <ligand>
        <name>FAD</name>
        <dbReference type="ChEBI" id="CHEBI:57692"/>
    </ligand>
</feature>
<feature type="binding site" evidence="1">
    <location>
        <begin position="314"/>
        <end position="315"/>
    </location>
    <ligand>
        <name>NAD(+)</name>
        <dbReference type="ChEBI" id="CHEBI:57540"/>
    </ligand>
</feature>
<feature type="binding site" evidence="1">
    <location>
        <begin position="314"/>
        <end position="315"/>
    </location>
    <ligand>
        <name>NADP(+)</name>
        <dbReference type="ChEBI" id="CHEBI:58349"/>
    </ligand>
</feature>
<feature type="binding site" evidence="1">
    <location>
        <position position="316"/>
    </location>
    <ligand>
        <name>FAD</name>
        <dbReference type="ChEBI" id="CHEBI:57692"/>
    </ligand>
</feature>
<feature type="binding site" evidence="1">
    <location>
        <position position="320"/>
    </location>
    <ligand>
        <name>L-ascorbate</name>
        <dbReference type="ChEBI" id="CHEBI:38290"/>
    </ligand>
</feature>
<feature type="binding site" evidence="1">
    <location>
        <position position="346"/>
    </location>
    <ligand>
        <name>FAD</name>
        <dbReference type="ChEBI" id="CHEBI:57692"/>
    </ligand>
</feature>
<feature type="binding site" evidence="1">
    <location>
        <position position="346"/>
    </location>
    <ligand>
        <name>NAD(+)</name>
        <dbReference type="ChEBI" id="CHEBI:57540"/>
    </ligand>
</feature>
<feature type="binding site" evidence="1">
    <location>
        <position position="346"/>
    </location>
    <ligand>
        <name>NADP(+)</name>
        <dbReference type="ChEBI" id="CHEBI:58349"/>
    </ligand>
</feature>
<feature type="binding site" evidence="1">
    <location>
        <position position="348"/>
    </location>
    <ligand>
        <name>L-ascorbate</name>
        <dbReference type="ChEBI" id="CHEBI:38290"/>
    </ligand>
</feature>
<keyword id="KW-0274">FAD</keyword>
<keyword id="KW-0285">Flavoprotein</keyword>
<keyword id="KW-0472">Membrane</keyword>
<keyword id="KW-0520">NAD</keyword>
<keyword id="KW-0521">NADP</keyword>
<keyword id="KW-0560">Oxidoreductase</keyword>
<keyword id="KW-0576">Peroxisome</keyword>
<keyword id="KW-0676">Redox-active center</keyword>
<keyword id="KW-1185">Reference proteome</keyword>
<keyword id="KW-0812">Transmembrane</keyword>
<keyword id="KW-1133">Transmembrane helix</keyword>
<reference key="1">
    <citation type="journal article" date="2004" name="Mol. Cells">
        <title>Further evidence of microcolinearity between barley and rice genomes at two orthologous regions.</title>
        <authorList>
            <person name="Park Y.-J."/>
            <person name="Dixit A."/>
            <person name="Yoo J.-W."/>
            <person name="Bennetzen J."/>
        </authorList>
    </citation>
    <scope>NUCLEOTIDE SEQUENCE [GENOMIC DNA]</scope>
    <source>
        <strain>cv. Nipponbare</strain>
    </source>
</reference>
<reference key="2">
    <citation type="journal article" date="2005" name="Nature">
        <title>The map-based sequence of the rice genome.</title>
        <authorList>
            <consortium name="International rice genome sequencing project (IRGSP)"/>
        </authorList>
    </citation>
    <scope>NUCLEOTIDE SEQUENCE [LARGE SCALE GENOMIC DNA]</scope>
    <source>
        <strain>cv. Nipponbare</strain>
    </source>
</reference>
<reference key="3">
    <citation type="journal article" date="2008" name="Nucleic Acids Res.">
        <title>The rice annotation project database (RAP-DB): 2008 update.</title>
        <authorList>
            <consortium name="The rice annotation project (RAP)"/>
        </authorList>
    </citation>
    <scope>GENOME REANNOTATION</scope>
    <source>
        <strain>cv. Nipponbare</strain>
    </source>
</reference>
<reference key="4">
    <citation type="journal article" date="2013" name="Rice">
        <title>Improvement of the Oryza sativa Nipponbare reference genome using next generation sequence and optical map data.</title>
        <authorList>
            <person name="Kawahara Y."/>
            <person name="de la Bastide M."/>
            <person name="Hamilton J.P."/>
            <person name="Kanamori H."/>
            <person name="McCombie W.R."/>
            <person name="Ouyang S."/>
            <person name="Schwartz D.C."/>
            <person name="Tanaka T."/>
            <person name="Wu J."/>
            <person name="Zhou S."/>
            <person name="Childs K.L."/>
            <person name="Davidson R.M."/>
            <person name="Lin H."/>
            <person name="Quesada-Ocampo L."/>
            <person name="Vaillancourt B."/>
            <person name="Sakai H."/>
            <person name="Lee S.S."/>
            <person name="Kim J."/>
            <person name="Numa H."/>
            <person name="Itoh T."/>
            <person name="Buell C.R."/>
            <person name="Matsumoto T."/>
        </authorList>
    </citation>
    <scope>GENOME REANNOTATION</scope>
    <source>
        <strain>cv. Nipponbare</strain>
    </source>
</reference>
<reference key="5">
    <citation type="journal article" date="2005" name="PLoS Biol.">
        <title>The genomes of Oryza sativa: a history of duplications.</title>
        <authorList>
            <person name="Yu J."/>
            <person name="Wang J."/>
            <person name="Lin W."/>
            <person name="Li S."/>
            <person name="Li H."/>
            <person name="Zhou J."/>
            <person name="Ni P."/>
            <person name="Dong W."/>
            <person name="Hu S."/>
            <person name="Zeng C."/>
            <person name="Zhang J."/>
            <person name="Zhang Y."/>
            <person name="Li R."/>
            <person name="Xu Z."/>
            <person name="Li S."/>
            <person name="Li X."/>
            <person name="Zheng H."/>
            <person name="Cong L."/>
            <person name="Lin L."/>
            <person name="Yin J."/>
            <person name="Geng J."/>
            <person name="Li G."/>
            <person name="Shi J."/>
            <person name="Liu J."/>
            <person name="Lv H."/>
            <person name="Li J."/>
            <person name="Wang J."/>
            <person name="Deng Y."/>
            <person name="Ran L."/>
            <person name="Shi X."/>
            <person name="Wang X."/>
            <person name="Wu Q."/>
            <person name="Li C."/>
            <person name="Ren X."/>
            <person name="Wang J."/>
            <person name="Wang X."/>
            <person name="Li D."/>
            <person name="Liu D."/>
            <person name="Zhang X."/>
            <person name="Ji Z."/>
            <person name="Zhao W."/>
            <person name="Sun Y."/>
            <person name="Zhang Z."/>
            <person name="Bao J."/>
            <person name="Han Y."/>
            <person name="Dong L."/>
            <person name="Ji J."/>
            <person name="Chen P."/>
            <person name="Wu S."/>
            <person name="Liu J."/>
            <person name="Xiao Y."/>
            <person name="Bu D."/>
            <person name="Tan J."/>
            <person name="Yang L."/>
            <person name="Ye C."/>
            <person name="Zhang J."/>
            <person name="Xu J."/>
            <person name="Zhou Y."/>
            <person name="Yu Y."/>
            <person name="Zhang B."/>
            <person name="Zhuang S."/>
            <person name="Wei H."/>
            <person name="Liu B."/>
            <person name="Lei M."/>
            <person name="Yu H."/>
            <person name="Li Y."/>
            <person name="Xu H."/>
            <person name="Wei S."/>
            <person name="He X."/>
            <person name="Fang L."/>
            <person name="Zhang Z."/>
            <person name="Zhang Y."/>
            <person name="Huang X."/>
            <person name="Su Z."/>
            <person name="Tong W."/>
            <person name="Li J."/>
            <person name="Tong Z."/>
            <person name="Li S."/>
            <person name="Ye J."/>
            <person name="Wang L."/>
            <person name="Fang L."/>
            <person name="Lei T."/>
            <person name="Chen C.-S."/>
            <person name="Chen H.-C."/>
            <person name="Xu Z."/>
            <person name="Li H."/>
            <person name="Huang H."/>
            <person name="Zhang F."/>
            <person name="Xu H."/>
            <person name="Li N."/>
            <person name="Zhao C."/>
            <person name="Li S."/>
            <person name="Dong L."/>
            <person name="Huang Y."/>
            <person name="Li L."/>
            <person name="Xi Y."/>
            <person name="Qi Q."/>
            <person name="Li W."/>
            <person name="Zhang B."/>
            <person name="Hu W."/>
            <person name="Zhang Y."/>
            <person name="Tian X."/>
            <person name="Jiao Y."/>
            <person name="Liang X."/>
            <person name="Jin J."/>
            <person name="Gao L."/>
            <person name="Zheng W."/>
            <person name="Hao B."/>
            <person name="Liu S.-M."/>
            <person name="Wang W."/>
            <person name="Yuan L."/>
            <person name="Cao M."/>
            <person name="McDermott J."/>
            <person name="Samudrala R."/>
            <person name="Wang J."/>
            <person name="Wong G.K.-S."/>
            <person name="Yang H."/>
        </authorList>
    </citation>
    <scope>NUCLEOTIDE SEQUENCE [LARGE SCALE GENOMIC DNA]</scope>
    <source>
        <strain>cv. Nipponbare</strain>
    </source>
</reference>
<reference key="6">
    <citation type="journal article" date="2003" name="Science">
        <title>Collection, mapping, and annotation of over 28,000 cDNA clones from japonica rice.</title>
        <authorList>
            <consortium name="The rice full-length cDNA consortium"/>
        </authorList>
    </citation>
    <scope>NUCLEOTIDE SEQUENCE [LARGE SCALE MRNA]</scope>
    <source>
        <strain>cv. Nipponbare</strain>
    </source>
</reference>
<reference key="7">
    <citation type="journal article" date="2015" name="J. Plant Physiol.">
        <title>Transcriptional profile of genes involved in ascorbate glutathione cycle in senescing leaves for an early senescence leaf (esl) rice mutant.</title>
        <authorList>
            <person name="Li Z."/>
            <person name="Su D."/>
            <person name="Lei B."/>
            <person name="Wang F."/>
            <person name="Geng W."/>
            <person name="Pan G."/>
            <person name="Cheng F."/>
        </authorList>
    </citation>
    <scope>INDUCTION</scope>
</reference>
<organism>
    <name type="scientific">Oryza sativa subsp. japonica</name>
    <name type="common">Rice</name>
    <dbReference type="NCBI Taxonomy" id="39947"/>
    <lineage>
        <taxon>Eukaryota</taxon>
        <taxon>Viridiplantae</taxon>
        <taxon>Streptophyta</taxon>
        <taxon>Embryophyta</taxon>
        <taxon>Tracheophyta</taxon>
        <taxon>Spermatophyta</taxon>
        <taxon>Magnoliopsida</taxon>
        <taxon>Liliopsida</taxon>
        <taxon>Poales</taxon>
        <taxon>Poaceae</taxon>
        <taxon>BOP clade</taxon>
        <taxon>Oryzoideae</taxon>
        <taxon>Oryzeae</taxon>
        <taxon>Oryzinae</taxon>
        <taxon>Oryza</taxon>
        <taxon>Oryza sativa</taxon>
    </lineage>
</organism>
<accession>Q8S3R2</accession>
<name>MDAR2_ORYSJ</name>
<sequence>MGRAFVHVILGGGVAAGYAALEFARRGGYSRGELCIISEETVAPYERPALSKGYLLPEGAARLPGFHTCVGANDELLTAKWYKENGIELVLGTKVITADVRMKTLLTATGETISYKNLIIATGARALKLEEFGISGSDASNICYLRNLDDADKLVNVMKSCPGGNAVVIGGGYIGMECAAALVTNRIKVTMVFPESHCMARLFTPKIAEYYENYYTSKGVTFVKGTVLTSFEKDSTGKVTSVILKDGKHLPADMVVVGIGIRASTGLFEGQLLMEQGGIKVNGQMLTSDGSVYAVGDVAAFPIKLFDGVIRRLEHVDSARRTARHAVAAILEPSKTKDIDYLPFFYSRVFTLSWQFYGNNTGEVVHFGDFTNSSPRFGAYWVDKSRIRGAFLEGGSREEYEAISNVVRRKAKVINIAELEKQGLMFAIQESQKDLPDGGLALGEKPTYVWHATAGVIAAASIAAFGYWYGRKRRRW</sequence>
<proteinExistence type="evidence at transcript level"/>